<accession>Q7NMA9</accession>
<gene>
    <name evidence="1" type="primary">psbF</name>
    <name type="ordered locus">gsr0857</name>
</gene>
<feature type="chain" id="PRO_0000200468" description="Cytochrome b559 subunit beta">
    <location>
        <begin position="1"/>
        <end position="51"/>
    </location>
</feature>
<feature type="transmembrane region" description="Helical" evidence="1">
    <location>
        <begin position="26"/>
        <end position="42"/>
    </location>
</feature>
<feature type="binding site" description="axial binding residue" evidence="1">
    <location>
        <position position="30"/>
    </location>
    <ligand>
        <name>heme</name>
        <dbReference type="ChEBI" id="CHEBI:30413"/>
        <note>ligand shared with alpha subunit</note>
    </ligand>
    <ligandPart>
        <name>Fe</name>
        <dbReference type="ChEBI" id="CHEBI:18248"/>
    </ligandPart>
</feature>
<organism>
    <name type="scientific">Gloeobacter violaceus (strain ATCC 29082 / PCC 7421)</name>
    <dbReference type="NCBI Taxonomy" id="251221"/>
    <lineage>
        <taxon>Bacteria</taxon>
        <taxon>Bacillati</taxon>
        <taxon>Cyanobacteriota</taxon>
        <taxon>Cyanophyceae</taxon>
        <taxon>Gloeobacterales</taxon>
        <taxon>Gloeobacteraceae</taxon>
        <taxon>Gloeobacter</taxon>
    </lineage>
</organism>
<dbReference type="EMBL" id="BA000045">
    <property type="protein sequence ID" value="BAC88798.1"/>
    <property type="molecule type" value="Genomic_DNA"/>
</dbReference>
<dbReference type="RefSeq" id="NP_923803.1">
    <property type="nucleotide sequence ID" value="NC_005125.1"/>
</dbReference>
<dbReference type="RefSeq" id="WP_011140859.1">
    <property type="nucleotide sequence ID" value="NC_005125.1"/>
</dbReference>
<dbReference type="SMR" id="Q7NMA9"/>
<dbReference type="STRING" id="251221.gene:10758335"/>
<dbReference type="EnsemblBacteria" id="BAC88798">
    <property type="protein sequence ID" value="BAC88798"/>
    <property type="gene ID" value="BAC88798"/>
</dbReference>
<dbReference type="KEGG" id="gvi:gsr0857"/>
<dbReference type="PATRIC" id="fig|251221.4.peg.874"/>
<dbReference type="eggNOG" id="ENOG50332KX">
    <property type="taxonomic scope" value="Bacteria"/>
</dbReference>
<dbReference type="HOGENOM" id="CLU_211753_1_0_3"/>
<dbReference type="InParanoid" id="Q7NMA9"/>
<dbReference type="OrthoDB" id="532613at2"/>
<dbReference type="PhylomeDB" id="Q7NMA9"/>
<dbReference type="Proteomes" id="UP000000557">
    <property type="component" value="Chromosome"/>
</dbReference>
<dbReference type="GO" id="GO:0005737">
    <property type="term" value="C:cytoplasm"/>
    <property type="evidence" value="ECO:0007669"/>
    <property type="project" value="UniProtKB-ARBA"/>
</dbReference>
<dbReference type="GO" id="GO:0009539">
    <property type="term" value="C:photosystem II reaction center"/>
    <property type="evidence" value="ECO:0007669"/>
    <property type="project" value="InterPro"/>
</dbReference>
<dbReference type="GO" id="GO:0005886">
    <property type="term" value="C:plasma membrane"/>
    <property type="evidence" value="ECO:0007669"/>
    <property type="project" value="UniProtKB-SubCell"/>
</dbReference>
<dbReference type="GO" id="GO:0009055">
    <property type="term" value="F:electron transfer activity"/>
    <property type="evidence" value="ECO:0007669"/>
    <property type="project" value="UniProtKB-UniRule"/>
</dbReference>
<dbReference type="GO" id="GO:0020037">
    <property type="term" value="F:heme binding"/>
    <property type="evidence" value="ECO:0007669"/>
    <property type="project" value="InterPro"/>
</dbReference>
<dbReference type="GO" id="GO:0005506">
    <property type="term" value="F:iron ion binding"/>
    <property type="evidence" value="ECO:0007669"/>
    <property type="project" value="UniProtKB-UniRule"/>
</dbReference>
<dbReference type="GO" id="GO:0009767">
    <property type="term" value="P:photosynthetic electron transport chain"/>
    <property type="evidence" value="ECO:0007669"/>
    <property type="project" value="InterPro"/>
</dbReference>
<dbReference type="HAMAP" id="MF_00643">
    <property type="entry name" value="PSII_PsbF"/>
    <property type="match status" value="1"/>
</dbReference>
<dbReference type="InterPro" id="IPR006241">
    <property type="entry name" value="PSII_cyt_b559_bsu"/>
</dbReference>
<dbReference type="InterPro" id="IPR006216">
    <property type="entry name" value="PSII_cyt_b559_CS"/>
</dbReference>
<dbReference type="InterPro" id="IPR013081">
    <property type="entry name" value="PSII_cyt_b559_N"/>
</dbReference>
<dbReference type="NCBIfam" id="TIGR01333">
    <property type="entry name" value="cyt_b559_beta"/>
    <property type="match status" value="1"/>
</dbReference>
<dbReference type="Pfam" id="PF00283">
    <property type="entry name" value="Cytochrom_B559"/>
    <property type="match status" value="1"/>
</dbReference>
<dbReference type="PIRSF" id="PIRSF000037">
    <property type="entry name" value="PsbF"/>
    <property type="match status" value="1"/>
</dbReference>
<dbReference type="SUPFAM" id="SSF161045">
    <property type="entry name" value="Cytochrome b559 subunits"/>
    <property type="match status" value="1"/>
</dbReference>
<dbReference type="PROSITE" id="PS00537">
    <property type="entry name" value="CYTOCHROME_B559"/>
    <property type="match status" value="1"/>
</dbReference>
<sequence>MTTSSNRPTPGGPTQPVSYPVFTVRWLAVHALTVPTIFFLGALAAMQFIQR</sequence>
<keyword id="KW-0997">Cell inner membrane</keyword>
<keyword id="KW-1003">Cell membrane</keyword>
<keyword id="KW-0249">Electron transport</keyword>
<keyword id="KW-0349">Heme</keyword>
<keyword id="KW-0408">Iron</keyword>
<keyword id="KW-0472">Membrane</keyword>
<keyword id="KW-0479">Metal-binding</keyword>
<keyword id="KW-0602">Photosynthesis</keyword>
<keyword id="KW-0604">Photosystem II</keyword>
<keyword id="KW-1185">Reference proteome</keyword>
<keyword id="KW-0812">Transmembrane</keyword>
<keyword id="KW-1133">Transmembrane helix</keyword>
<keyword id="KW-0813">Transport</keyword>
<proteinExistence type="inferred from homology"/>
<name>PSBF_GLOVI</name>
<protein>
    <recommendedName>
        <fullName evidence="1">Cytochrome b559 subunit beta</fullName>
    </recommendedName>
    <alternativeName>
        <fullName evidence="1">PSII reaction center subunit VI</fullName>
    </alternativeName>
</protein>
<comment type="function">
    <text evidence="1">This b-type cytochrome is tightly associated with the reaction center of photosystem II (PSII). PSII is a light-driven water:plastoquinone oxidoreductase that uses light energy to abstract electrons from H(2)O, generating O(2) and a proton gradient subsequently used for ATP formation. It consists of a core antenna complex that captures photons, and an electron transfer chain that converts photonic excitation into a charge separation.</text>
</comment>
<comment type="cofactor">
    <cofactor evidence="1">
        <name>heme b</name>
        <dbReference type="ChEBI" id="CHEBI:60344"/>
    </cofactor>
    <text evidence="1">With its partner (PsbE) binds heme. PSII binds additional chlorophylls, carotenoids and specific lipids.</text>
</comment>
<comment type="subunit">
    <text evidence="2">Heterodimer of an alpha subunit and a beta subunit. PSII is composed of 1 copy each of membrane proteins PsbA, PsbB, PsbC, PsbD, PsbE, PsbF, PsbH, PsbI, PsbJ, PsbK, PsbL, PsbM, PsbT, PsbX, Psb30/Ycf12, peripheral proteins PsbO, CyanoQ (PsbQ), PsbU, PsbV and a large number of cofactors. It forms dimeric complexes.</text>
</comment>
<comment type="subcellular location">
    <subcellularLocation>
        <location evidence="1">Cell inner membrane</location>
        <topology evidence="1">Single-pass membrane protein</topology>
    </subcellularLocation>
</comment>
<comment type="similarity">
    <text evidence="1">Belongs to the PsbE/PsbF family.</text>
</comment>
<reference key="1">
    <citation type="journal article" date="2003" name="DNA Res.">
        <title>Complete genome structure of Gloeobacter violaceus PCC 7421, a cyanobacterium that lacks thylakoids.</title>
        <authorList>
            <person name="Nakamura Y."/>
            <person name="Kaneko T."/>
            <person name="Sato S."/>
            <person name="Mimuro M."/>
            <person name="Miyashita H."/>
            <person name="Tsuchiya T."/>
            <person name="Sasamoto S."/>
            <person name="Watanabe A."/>
            <person name="Kawashima K."/>
            <person name="Kishida Y."/>
            <person name="Kiyokawa C."/>
            <person name="Kohara M."/>
            <person name="Matsumoto M."/>
            <person name="Matsuno A."/>
            <person name="Nakazaki N."/>
            <person name="Shimpo S."/>
            <person name="Takeuchi C."/>
            <person name="Yamada M."/>
            <person name="Tabata S."/>
        </authorList>
    </citation>
    <scope>NUCLEOTIDE SEQUENCE [LARGE SCALE GENOMIC DNA]</scope>
    <source>
        <strain>ATCC 29082 / PCC 7421</strain>
    </source>
</reference>
<evidence type="ECO:0000255" key="1">
    <source>
        <dbReference type="HAMAP-Rule" id="MF_00643"/>
    </source>
</evidence>
<evidence type="ECO:0000305" key="2">
    <source>
    </source>
</evidence>